<feature type="chain" id="PRO_0000110617" description="Glutaminase">
    <location>
        <begin position="1"/>
        <end position="302"/>
    </location>
</feature>
<feature type="binding site" evidence="1">
    <location>
        <position position="61"/>
    </location>
    <ligand>
        <name>substrate</name>
    </ligand>
</feature>
<feature type="binding site" evidence="1">
    <location>
        <position position="111"/>
    </location>
    <ligand>
        <name>substrate</name>
    </ligand>
</feature>
<feature type="binding site" evidence="1">
    <location>
        <position position="155"/>
    </location>
    <ligand>
        <name>substrate</name>
    </ligand>
</feature>
<feature type="binding site" evidence="1">
    <location>
        <position position="162"/>
    </location>
    <ligand>
        <name>substrate</name>
    </ligand>
</feature>
<feature type="binding site" evidence="1">
    <location>
        <position position="186"/>
    </location>
    <ligand>
        <name>substrate</name>
    </ligand>
</feature>
<feature type="binding site" evidence="1">
    <location>
        <position position="238"/>
    </location>
    <ligand>
        <name>substrate</name>
    </ligand>
</feature>
<feature type="binding site" evidence="1">
    <location>
        <position position="256"/>
    </location>
    <ligand>
        <name>substrate</name>
    </ligand>
</feature>
<name>GLSA_PSESM</name>
<evidence type="ECO:0000255" key="1">
    <source>
        <dbReference type="HAMAP-Rule" id="MF_00313"/>
    </source>
</evidence>
<reference key="1">
    <citation type="journal article" date="2003" name="Proc. Natl. Acad. Sci. U.S.A.">
        <title>The complete genome sequence of the Arabidopsis and tomato pathogen Pseudomonas syringae pv. tomato DC3000.</title>
        <authorList>
            <person name="Buell C.R."/>
            <person name="Joardar V."/>
            <person name="Lindeberg M."/>
            <person name="Selengut J."/>
            <person name="Paulsen I.T."/>
            <person name="Gwinn M.L."/>
            <person name="Dodson R.J."/>
            <person name="DeBoy R.T."/>
            <person name="Durkin A.S."/>
            <person name="Kolonay J.F."/>
            <person name="Madupu R."/>
            <person name="Daugherty S.C."/>
            <person name="Brinkac L.M."/>
            <person name="Beanan M.J."/>
            <person name="Haft D.H."/>
            <person name="Nelson W.C."/>
            <person name="Davidsen T.M."/>
            <person name="Zafar N."/>
            <person name="Zhou L."/>
            <person name="Liu J."/>
            <person name="Yuan Q."/>
            <person name="Khouri H.M."/>
            <person name="Fedorova N.B."/>
            <person name="Tran B."/>
            <person name="Russell D."/>
            <person name="Berry K.J."/>
            <person name="Utterback T.R."/>
            <person name="Van Aken S.E."/>
            <person name="Feldblyum T.V."/>
            <person name="D'Ascenzo M."/>
            <person name="Deng W.-L."/>
            <person name="Ramos A.R."/>
            <person name="Alfano J.R."/>
            <person name="Cartinhour S."/>
            <person name="Chatterjee A.K."/>
            <person name="Delaney T.P."/>
            <person name="Lazarowitz S.G."/>
            <person name="Martin G.B."/>
            <person name="Schneider D.J."/>
            <person name="Tang X."/>
            <person name="Bender C.L."/>
            <person name="White O."/>
            <person name="Fraser C.M."/>
            <person name="Collmer A."/>
        </authorList>
    </citation>
    <scope>NUCLEOTIDE SEQUENCE [LARGE SCALE GENOMIC DNA]</scope>
    <source>
        <strain>ATCC BAA-871 / DC3000</strain>
    </source>
</reference>
<sequence>MHDLLNEILDEVRPLLGQGKVADYIPALGGVRPDQLGIAVYGNDGQVFSAGDAETLFSIQSISKVFSLVQAIGHSGEDIWQRLGHEPSGQPFNSLVQLEFEQGRPRNPFINAGALVICDINQARFAAPSLSMRDFVRRLCGNRSITSDSKVAESEYQHRSRNAAAAYLMKSFDNFHGDVEDVLRSYFHHCALSMNCIDLAKAFGFLANQGFCAHSGVQILTARQATQVNSIMATSGLYDEAGNFAYRVGLPGKSGVGGGIVAIVPERASVCVWSPALNAAGNSLVGMAALEKLSARVDWSVF</sequence>
<accession>Q882Y4</accession>
<protein>
    <recommendedName>
        <fullName evidence="1">Glutaminase</fullName>
        <ecNumber evidence="1">3.5.1.2</ecNumber>
    </recommendedName>
</protein>
<gene>
    <name evidence="1" type="primary">glsA</name>
    <name type="ordered locus">PSPTO_2488</name>
</gene>
<organism>
    <name type="scientific">Pseudomonas syringae pv. tomato (strain ATCC BAA-871 / DC3000)</name>
    <dbReference type="NCBI Taxonomy" id="223283"/>
    <lineage>
        <taxon>Bacteria</taxon>
        <taxon>Pseudomonadati</taxon>
        <taxon>Pseudomonadota</taxon>
        <taxon>Gammaproteobacteria</taxon>
        <taxon>Pseudomonadales</taxon>
        <taxon>Pseudomonadaceae</taxon>
        <taxon>Pseudomonas</taxon>
    </lineage>
</organism>
<proteinExistence type="inferred from homology"/>
<keyword id="KW-0378">Hydrolase</keyword>
<keyword id="KW-1185">Reference proteome</keyword>
<comment type="catalytic activity">
    <reaction evidence="1">
        <text>L-glutamine + H2O = L-glutamate + NH4(+)</text>
        <dbReference type="Rhea" id="RHEA:15889"/>
        <dbReference type="ChEBI" id="CHEBI:15377"/>
        <dbReference type="ChEBI" id="CHEBI:28938"/>
        <dbReference type="ChEBI" id="CHEBI:29985"/>
        <dbReference type="ChEBI" id="CHEBI:58359"/>
        <dbReference type="EC" id="3.5.1.2"/>
    </reaction>
</comment>
<comment type="subunit">
    <text evidence="1">Homotetramer.</text>
</comment>
<comment type="similarity">
    <text evidence="1">Belongs to the glutaminase family.</text>
</comment>
<dbReference type="EC" id="3.5.1.2" evidence="1"/>
<dbReference type="EMBL" id="AE016853">
    <property type="protein sequence ID" value="AAO55995.1"/>
    <property type="molecule type" value="Genomic_DNA"/>
</dbReference>
<dbReference type="RefSeq" id="NP_792300.1">
    <property type="nucleotide sequence ID" value="NC_004578.1"/>
</dbReference>
<dbReference type="SMR" id="Q882Y4"/>
<dbReference type="STRING" id="223283.PSPTO_2488"/>
<dbReference type="KEGG" id="pst:PSPTO_2488"/>
<dbReference type="PATRIC" id="fig|223283.9.peg.2528"/>
<dbReference type="eggNOG" id="COG2066">
    <property type="taxonomic scope" value="Bacteria"/>
</dbReference>
<dbReference type="HOGENOM" id="CLU_027932_1_1_6"/>
<dbReference type="OrthoDB" id="9788822at2"/>
<dbReference type="PhylomeDB" id="Q882Y4"/>
<dbReference type="Proteomes" id="UP000002515">
    <property type="component" value="Chromosome"/>
</dbReference>
<dbReference type="GO" id="GO:0004359">
    <property type="term" value="F:glutaminase activity"/>
    <property type="evidence" value="ECO:0007669"/>
    <property type="project" value="UniProtKB-UniRule"/>
</dbReference>
<dbReference type="GO" id="GO:0006537">
    <property type="term" value="P:glutamate biosynthetic process"/>
    <property type="evidence" value="ECO:0007669"/>
    <property type="project" value="TreeGrafter"/>
</dbReference>
<dbReference type="GO" id="GO:0006543">
    <property type="term" value="P:glutamine catabolic process"/>
    <property type="evidence" value="ECO:0007669"/>
    <property type="project" value="TreeGrafter"/>
</dbReference>
<dbReference type="FunFam" id="3.40.710.10:FF:000005">
    <property type="entry name" value="Glutaminase"/>
    <property type="match status" value="1"/>
</dbReference>
<dbReference type="Gene3D" id="3.40.710.10">
    <property type="entry name" value="DD-peptidase/beta-lactamase superfamily"/>
    <property type="match status" value="1"/>
</dbReference>
<dbReference type="HAMAP" id="MF_00313">
    <property type="entry name" value="Glutaminase"/>
    <property type="match status" value="1"/>
</dbReference>
<dbReference type="InterPro" id="IPR012338">
    <property type="entry name" value="Beta-lactam/transpept-like"/>
</dbReference>
<dbReference type="InterPro" id="IPR015868">
    <property type="entry name" value="Glutaminase"/>
</dbReference>
<dbReference type="NCBIfam" id="TIGR03814">
    <property type="entry name" value="Gln_ase"/>
    <property type="match status" value="1"/>
</dbReference>
<dbReference type="NCBIfam" id="NF002132">
    <property type="entry name" value="PRK00971.1-1"/>
    <property type="match status" value="1"/>
</dbReference>
<dbReference type="NCBIfam" id="NF002133">
    <property type="entry name" value="PRK00971.1-2"/>
    <property type="match status" value="1"/>
</dbReference>
<dbReference type="PANTHER" id="PTHR12544">
    <property type="entry name" value="GLUTAMINASE"/>
    <property type="match status" value="1"/>
</dbReference>
<dbReference type="PANTHER" id="PTHR12544:SF29">
    <property type="entry name" value="GLUTAMINASE"/>
    <property type="match status" value="1"/>
</dbReference>
<dbReference type="Pfam" id="PF04960">
    <property type="entry name" value="Glutaminase"/>
    <property type="match status" value="1"/>
</dbReference>
<dbReference type="SUPFAM" id="SSF56601">
    <property type="entry name" value="beta-lactamase/transpeptidase-like"/>
    <property type="match status" value="1"/>
</dbReference>